<comment type="function">
    <text evidence="1">Accelerates the degradation of transcripts by removing pyrophosphate from the 5'-end of triphosphorylated RNA, leading to a more labile monophosphorylated state that can stimulate subsequent ribonuclease cleavage.</text>
</comment>
<comment type="cofactor">
    <cofactor evidence="1">
        <name>a divalent metal cation</name>
        <dbReference type="ChEBI" id="CHEBI:60240"/>
    </cofactor>
</comment>
<comment type="similarity">
    <text evidence="1">Belongs to the Nudix hydrolase family. RppH subfamily.</text>
</comment>
<gene>
    <name evidence="1" type="primary">rppH</name>
    <name evidence="1" type="synonym">nudH</name>
    <name type="ordered locus">YpsIP31758_0981</name>
</gene>
<protein>
    <recommendedName>
        <fullName evidence="1">RNA pyrophosphohydrolase</fullName>
        <ecNumber evidence="1">3.6.1.-</ecNumber>
    </recommendedName>
    <alternativeName>
        <fullName evidence="1">(Di)nucleoside polyphosphate hydrolase</fullName>
    </alternativeName>
</protein>
<proteinExistence type="inferred from homology"/>
<sequence length="175" mass="20893">MIDDDGYRPNVGIVICNRQGEVLWARRYGQHSWQFPQGGINPGETPEQAMYRELFEEVGLNKKDVRILASTRNWLRYKLPKRLVRWDTKPVCIGQKQRWFLLQLMCNEAEINMQRSSTPEFDGWRWVSYWYPVRQVVSFKRDVYRRVMKEFAATVMPVQEVAPPRVPPAYRRKRG</sequence>
<accession>A7FFD7</accession>
<keyword id="KW-0378">Hydrolase</keyword>
<organism>
    <name type="scientific">Yersinia pseudotuberculosis serotype O:1b (strain IP 31758)</name>
    <dbReference type="NCBI Taxonomy" id="349747"/>
    <lineage>
        <taxon>Bacteria</taxon>
        <taxon>Pseudomonadati</taxon>
        <taxon>Pseudomonadota</taxon>
        <taxon>Gammaproteobacteria</taxon>
        <taxon>Enterobacterales</taxon>
        <taxon>Yersiniaceae</taxon>
        <taxon>Yersinia</taxon>
    </lineage>
</organism>
<name>RPPH_YERP3</name>
<reference key="1">
    <citation type="journal article" date="2007" name="PLoS Genet.">
        <title>The complete genome sequence of Yersinia pseudotuberculosis IP31758, the causative agent of Far East scarlet-like fever.</title>
        <authorList>
            <person name="Eppinger M."/>
            <person name="Rosovitz M.J."/>
            <person name="Fricke W.F."/>
            <person name="Rasko D.A."/>
            <person name="Kokorina G."/>
            <person name="Fayolle C."/>
            <person name="Lindler L.E."/>
            <person name="Carniel E."/>
            <person name="Ravel J."/>
        </authorList>
    </citation>
    <scope>NUCLEOTIDE SEQUENCE [LARGE SCALE GENOMIC DNA]</scope>
    <source>
        <strain>IP 31758</strain>
    </source>
</reference>
<feature type="chain" id="PRO_1000059303" description="RNA pyrophosphohydrolase">
    <location>
        <begin position="1"/>
        <end position="175"/>
    </location>
</feature>
<feature type="domain" description="Nudix hydrolase" evidence="1">
    <location>
        <begin position="6"/>
        <end position="149"/>
    </location>
</feature>
<feature type="short sequence motif" description="Nudix box">
    <location>
        <begin position="38"/>
        <end position="59"/>
    </location>
</feature>
<evidence type="ECO:0000255" key="1">
    <source>
        <dbReference type="HAMAP-Rule" id="MF_00298"/>
    </source>
</evidence>
<dbReference type="EC" id="3.6.1.-" evidence="1"/>
<dbReference type="EMBL" id="CP000720">
    <property type="protein sequence ID" value="ABS45823.1"/>
    <property type="molecule type" value="Genomic_DNA"/>
</dbReference>
<dbReference type="RefSeq" id="WP_002211381.1">
    <property type="nucleotide sequence ID" value="NC_009708.1"/>
</dbReference>
<dbReference type="SMR" id="A7FFD7"/>
<dbReference type="GeneID" id="57973848"/>
<dbReference type="KEGG" id="ypi:YpsIP31758_0981"/>
<dbReference type="HOGENOM" id="CLU_087195_3_2_6"/>
<dbReference type="Proteomes" id="UP000002412">
    <property type="component" value="Chromosome"/>
</dbReference>
<dbReference type="GO" id="GO:0005737">
    <property type="term" value="C:cytoplasm"/>
    <property type="evidence" value="ECO:0007669"/>
    <property type="project" value="TreeGrafter"/>
</dbReference>
<dbReference type="GO" id="GO:0034353">
    <property type="term" value="F:mRNA 5'-diphosphatase activity"/>
    <property type="evidence" value="ECO:0007669"/>
    <property type="project" value="TreeGrafter"/>
</dbReference>
<dbReference type="GO" id="GO:0006402">
    <property type="term" value="P:mRNA catabolic process"/>
    <property type="evidence" value="ECO:0007669"/>
    <property type="project" value="TreeGrafter"/>
</dbReference>
<dbReference type="CDD" id="cd03671">
    <property type="entry name" value="NUDIX_Ap4A_hydrolase_plant_like"/>
    <property type="match status" value="1"/>
</dbReference>
<dbReference type="FunFam" id="3.90.79.10:FF:000001">
    <property type="entry name" value="RNA pyrophosphohydrolase"/>
    <property type="match status" value="1"/>
</dbReference>
<dbReference type="Gene3D" id="3.90.79.10">
    <property type="entry name" value="Nucleoside Triphosphate Pyrophosphohydrolase"/>
    <property type="match status" value="1"/>
</dbReference>
<dbReference type="HAMAP" id="MF_00298">
    <property type="entry name" value="Nudix_RppH"/>
    <property type="match status" value="1"/>
</dbReference>
<dbReference type="InterPro" id="IPR020476">
    <property type="entry name" value="Nudix_hydrolase"/>
</dbReference>
<dbReference type="InterPro" id="IPR015797">
    <property type="entry name" value="NUDIX_hydrolase-like_dom_sf"/>
</dbReference>
<dbReference type="InterPro" id="IPR020084">
    <property type="entry name" value="NUDIX_hydrolase_CS"/>
</dbReference>
<dbReference type="InterPro" id="IPR000086">
    <property type="entry name" value="NUDIX_hydrolase_dom"/>
</dbReference>
<dbReference type="InterPro" id="IPR022927">
    <property type="entry name" value="RppH"/>
</dbReference>
<dbReference type="NCBIfam" id="NF001934">
    <property type="entry name" value="PRK00714.1-1"/>
    <property type="match status" value="1"/>
</dbReference>
<dbReference type="NCBIfam" id="NF001937">
    <property type="entry name" value="PRK00714.1-4"/>
    <property type="match status" value="1"/>
</dbReference>
<dbReference type="NCBIfam" id="NF001938">
    <property type="entry name" value="PRK00714.1-5"/>
    <property type="match status" value="1"/>
</dbReference>
<dbReference type="PANTHER" id="PTHR23114">
    <property type="entry name" value="M7GPPPN-MRNA HYDROLASE"/>
    <property type="match status" value="1"/>
</dbReference>
<dbReference type="PANTHER" id="PTHR23114:SF17">
    <property type="entry name" value="M7GPPPN-MRNA HYDROLASE"/>
    <property type="match status" value="1"/>
</dbReference>
<dbReference type="Pfam" id="PF00293">
    <property type="entry name" value="NUDIX"/>
    <property type="match status" value="1"/>
</dbReference>
<dbReference type="PRINTS" id="PR00502">
    <property type="entry name" value="NUDIXFAMILY"/>
</dbReference>
<dbReference type="SUPFAM" id="SSF55811">
    <property type="entry name" value="Nudix"/>
    <property type="match status" value="1"/>
</dbReference>
<dbReference type="PROSITE" id="PS51462">
    <property type="entry name" value="NUDIX"/>
    <property type="match status" value="1"/>
</dbReference>
<dbReference type="PROSITE" id="PS00893">
    <property type="entry name" value="NUDIX_BOX"/>
    <property type="match status" value="1"/>
</dbReference>